<gene>
    <name type="primary">Cav1</name>
    <name type="synonym">Cav</name>
</gene>
<comment type="function">
    <text evidence="4 7 11 13">May act as a scaffolding protein within caveolar membranes (By similarity). Forms a stable heterooligomeric complex with CAV2 that targets to lipid rafts and drives caveolae formation. Mediates the recruitment of CAVIN proteins (CAVIN1/2/3/4) to the caveolae (PubMed:19546242). Interacts directly with G-protein alpha subunits and can functionally regulate their activity (By similarity). Involved in the costimulatory signal essential for T-cell receptor (TCR)-mediated T-cell activation. Its binding to DPP4 induces T-cell proliferation and NF-kappa-B activation in a T-cell receptor/CD3-dependent manner (By similarity). Recruits CTNNB1 to caveolar membranes and may regulate CTNNB1-mediated signaling through the Wnt pathway (PubMed:10816572). Negatively regulates TGFB1-mediated activation of SMAD2/3 by mediating the internalization of TGFBR1 from membrane rafts leading to its subsequent degradation (By similarity). Binds 20(S)-hydroxycholesterol (20(S)-OHC) (PubMed:34799735).</text>
</comment>
<comment type="subunit">
    <text evidence="3 4 5 10 11 12">Homooligomer. Interacts (via the N-terminus) with DPP4; the interaction is direct. Forms a stable heterooligomeric complex with CAV2 that targets to lipid rafts and drives caveolae formation. Interacts with BMX, BTK, CTNNB1, CDH1, GLIPR2, JUP, NOSTRIN, SNAP25 and STX1A. Interacts with SLC7A9. Interacts with TGFBR1 (By similarity). Interacts with CTNNB1, CDH1 and JUP. Interacts with PACSIN2; this interaction induces membrane tubulation (PubMed:21610094). Interacts with CAVIN3 (via leucine-zipper domain) in a cholesterol-sensitive manner. Interacts with EHD2 in a cholesterol-dependent manner (By similarity). Interacts with CAVIN1 (PubMed:19546242). Forms a ternary complex with UBXN6 and VCP; mediates CAV1 targeting to lysosomes for degradation (By similarity). Interacts with ABCG1; this interaction regulates ABCG1-mediated cholesterol efflux (By similarity). Interacts with NEU3; this interaction enhances NEU3 sialidase activity within caveola. Interacts (via C-terminus) with SPRY1, SPRY2 (via C-terminus), SPRY3, and SPRY4 (PubMed:16877379). Interacts with IGFBP5; this interaction allows trafficking of IGFBP5 from the plasma membrane to the nucleus (By similarity).</text>
</comment>
<comment type="interaction">
    <interactant intactId="EBI-1161338">
        <id>P49817</id>
    </interactant>
    <interactant intactId="EBI-6999015">
        <id>P15208</id>
        <label>Insr</label>
    </interactant>
    <organismsDiffer>false</organismsDiffer>
    <experiments>2</experiments>
</comment>
<comment type="interaction">
    <interactant intactId="EBI-1161338">
        <id>P49817</id>
    </interactant>
    <interactant intactId="EBI-2899393">
        <id>Q64729</id>
        <label>Tgfbr1</label>
    </interactant>
    <organismsDiffer>false</organismsDiffer>
    <experiments>4</experiments>
</comment>
<comment type="interaction">
    <interactant intactId="EBI-1161338">
        <id>P49817</id>
    </interactant>
    <interactant intactId="EBI-1003422">
        <id>Q07820</id>
        <label>MCL1</label>
    </interactant>
    <organismsDiffer>true</organismsDiffer>
    <experiments>3</experiments>
</comment>
<comment type="interaction">
    <interactant intactId="EBI-1161338">
        <id>P49817</id>
    </interactant>
    <interactant intactId="EBI-1050999">
        <id>P22307</id>
        <label>SCP2</label>
    </interactant>
    <organismsDiffer>true</organismsDiffer>
    <experiments>3</experiments>
</comment>
<comment type="subcellular location">
    <subcellularLocation>
        <location evidence="1">Golgi apparatus membrane</location>
        <topology evidence="1">Peripheral membrane protein</topology>
    </subcellularLocation>
    <subcellularLocation>
        <location evidence="1">Cell membrane</location>
        <topology evidence="1">Peripheral membrane protein</topology>
    </subcellularLocation>
    <subcellularLocation>
        <location evidence="11 12">Membrane</location>
        <location evidence="11 12">Caveola</location>
        <topology evidence="12">Peripheral membrane protein</topology>
    </subcellularLocation>
    <subcellularLocation>
        <location evidence="4">Membrane raft</location>
    </subcellularLocation>
    <subcellularLocation>
        <location evidence="2">Golgi apparatus</location>
        <location evidence="2">trans-Golgi network</location>
    </subcellularLocation>
    <text evidence="1">Colocalized with DPP4 in membrane rafts. Potential hairpin-like structure in the membrane. Membrane protein of caveolae (By similarity).</text>
</comment>
<comment type="alternative products">
    <event type="alternative initiation"/>
    <isoform>
        <id>P49817-1</id>
        <name>1</name>
        <sequence type="displayed"/>
    </isoform>
    <isoform>
        <id>P49817-2</id>
        <name>2</name>
        <sequence type="described" ref="VSP_018693"/>
    </isoform>
</comment>
<comment type="tissue specificity">
    <text evidence="11">Adipose tissue, lung, heart, skeletal muscle, stomach, small bowel, kidney, spleen and testis (at protein level).</text>
</comment>
<comment type="PTM">
    <text>The N-terminus of both isoforms are blocked.</text>
</comment>
<comment type="PTM">
    <text evidence="8 9">Phosphorylated at Tyr-14 by ABL1 in response to oxidative stress.</text>
</comment>
<comment type="PTM">
    <text evidence="4">Ubiquitinated. Undergo monoubiquitination and multi- and/or polyubiquitination. Monoubiquitination of N-terminal lysines promotes integration in a ternary complex with UBXN6 and VCP which promotes oligomeric CAV1 targeting to lysosomes for degradation. Ubiquitinated by ZNRF1; leading to degradation and modulation of the TLR4-mediated immune response.</text>
</comment>
<comment type="similarity">
    <text evidence="16">Belongs to the caveolin family.</text>
</comment>
<protein>
    <recommendedName>
        <fullName>Caveolin-1</fullName>
    </recommendedName>
</protein>
<feature type="initiator methionine" description="Removed" evidence="18">
    <location>
        <position position="1"/>
    </location>
</feature>
<feature type="chain" id="PRO_0000004766" description="Caveolin-1">
    <location>
        <begin position="2"/>
        <end position="178"/>
    </location>
</feature>
<feature type="topological domain" description="Cytoplasmic" evidence="6">
    <location>
        <begin position="2"/>
        <end position="104"/>
    </location>
</feature>
<feature type="intramembrane region" description="Helical" evidence="6">
    <location>
        <begin position="105"/>
        <end position="125"/>
    </location>
</feature>
<feature type="topological domain" description="Cytoplasmic" evidence="6">
    <location>
        <begin position="126"/>
        <end position="178"/>
    </location>
</feature>
<feature type="region of interest" description="Required for homooligomerization" evidence="4">
    <location>
        <begin position="2"/>
        <end position="94"/>
    </location>
</feature>
<feature type="region of interest" description="Interaction with CAVIN3" evidence="4">
    <location>
        <begin position="82"/>
        <end position="94"/>
    </location>
</feature>
<feature type="region of interest" description="Interacts with SPRY1, SPRY2, SPRY3 and SPRY4" evidence="10">
    <location>
        <begin position="131"/>
        <end position="142"/>
    </location>
</feature>
<feature type="region of interest" description="Interacts with SPRY1, SPRY2, and SPRY4" evidence="10">
    <location>
        <begin position="149"/>
        <end position="160"/>
    </location>
</feature>
<feature type="region of interest" description="Interacts with SPRY1, SPRY2, SPRY3 and SPRY4" evidence="10">
    <location>
        <begin position="167"/>
        <end position="178"/>
    </location>
</feature>
<feature type="modified residue" description="N-acetylserine" evidence="18">
    <location>
        <position position="2"/>
    </location>
</feature>
<feature type="modified residue" description="Phosphoserine" evidence="3">
    <location>
        <position position="2"/>
    </location>
</feature>
<feature type="modified residue" description="N6-acetyllysine; alternate" evidence="18">
    <location>
        <position position="5"/>
    </location>
</feature>
<feature type="modified residue" description="Phosphotyrosine" evidence="4">
    <location>
        <position position="6"/>
    </location>
</feature>
<feature type="modified residue" description="Phosphoserine" evidence="17">
    <location>
        <position position="9"/>
    </location>
</feature>
<feature type="modified residue" description="Phosphotyrosine; by ABL1 and INSR" evidence="8 9 17">
    <location>
        <position position="14"/>
    </location>
</feature>
<feature type="modified residue" description="Phosphotyrosine" evidence="4">
    <location>
        <position position="25"/>
    </location>
</feature>
<feature type="lipid moiety-binding region" description="S-palmitoyl cysteine" evidence="1">
    <location>
        <position position="133"/>
    </location>
</feature>
<feature type="lipid moiety-binding region" description="S-palmitoyl cysteine" evidence="1">
    <location>
        <position position="143"/>
    </location>
</feature>
<feature type="lipid moiety-binding region" description="S-palmitoyl cysteine" evidence="1">
    <location>
        <position position="156"/>
    </location>
</feature>
<feature type="cross-link" description="Glycyl lysine isopeptide (Lys-Gly) (interchain with G-Cter in ubiquitin); alternate" evidence="4">
    <location>
        <position position="5"/>
    </location>
</feature>
<feature type="cross-link" description="Glycyl lysine isopeptide (Lys-Gly) (interchain with G-Cter in ubiquitin)" evidence="4">
    <location>
        <position position="26"/>
    </location>
</feature>
<feature type="cross-link" description="Glycyl lysine isopeptide (Lys-Gly) (interchain with G-Cter in ubiquitin)" evidence="4">
    <location>
        <position position="30"/>
    </location>
</feature>
<feature type="cross-link" description="Glycyl lysine isopeptide (Lys-Gly) (interchain with G-Cter in ubiquitin)" evidence="4">
    <location>
        <position position="39"/>
    </location>
</feature>
<feature type="cross-link" description="Glycyl lysine isopeptide (Lys-Gly) (interchain with G-Cter in ubiquitin)" evidence="4">
    <location>
        <position position="47"/>
    </location>
</feature>
<feature type="cross-link" description="Glycyl lysine isopeptide (Lys-Gly) (interchain with G-Cter in ubiquitin)" evidence="4">
    <location>
        <position position="57"/>
    </location>
</feature>
<feature type="splice variant" id="VSP_018693" description="In isoform 2." evidence="14 15">
    <location>
        <begin position="1"/>
        <end position="31"/>
    </location>
</feature>
<feature type="sequence conflict" description="In Ref. 4; BAC29118." evidence="16" ref="4">
    <original>I</original>
    <variation>F</variation>
    <location>
        <position position="170"/>
    </location>
</feature>
<proteinExistence type="evidence at protein level"/>
<sequence length="178" mass="20539">MSGGKYVDSEGHLYTVPIREQGNIYKPNNKAMADEVTEKQVYDAHTKEIDLVNRDPKHLNDDVVKIDFEDVIAEPEGTHSFDGIWKASFTTFTVTKYWFYRLLSTIFGIPMALIWGIYFAILSFLHIWAVVPCIKSFLIEIQCISRVYSIYVHTFCDPLFEAIGKIFSNIRISTQKEI</sequence>
<accession>P49817</accession>
<accession>Q8C1X7</accession>
<accession>Q8CBP4</accession>
<accession>Q9QYH3</accession>
<accession>Q9QYH4</accession>
<reference key="1">
    <citation type="journal article" date="1994" name="Gene">
        <title>The primary sequence of murine caveolin reveals a conserved consensus site for phosphorylation by protein kinase C.</title>
        <authorList>
            <person name="Tang Z."/>
            <person name="Scherer P.E."/>
            <person name="Lisanti M.P."/>
        </authorList>
    </citation>
    <scope>NUCLEOTIDE SEQUENCE [MRNA] (ISOFORM 1)</scope>
    <source>
        <strain>BALB/cJ</strain>
    </source>
</reference>
<reference key="2">
    <citation type="journal article" date="2000" name="FEBS Lett.">
        <title>Caveolin-1 isoforms are encoded in distinct mRNAs: identification of mouse caveolin-1 mRNA variants caused by alternative transcription initiation and splicing.</title>
        <authorList>
            <person name="Kogo H."/>
            <person name="Fujimoto T."/>
        </authorList>
    </citation>
    <scope>NUCLEOTIDE SEQUENCE [GENOMIC DNA / MRNA] (ISOFORMS 1 AND 2)</scope>
</reference>
<reference key="3">
    <citation type="submission" date="2003-10" db="EMBL/GenBank/DDBJ databases">
        <title>Met gene is a candidate for the mouse pulmonary adenoma resistance 4 (Par4) locus.</title>
        <authorList>
            <person name="Zaffaroni D."/>
            <person name="Dragani T.A."/>
        </authorList>
    </citation>
    <scope>NUCLEOTIDE SEQUENCE [MRNA] (ISOFORM 1)</scope>
    <source>
        <strain>SWR/J</strain>
    </source>
</reference>
<reference key="4">
    <citation type="journal article" date="2005" name="Science">
        <title>The transcriptional landscape of the mammalian genome.</title>
        <authorList>
            <person name="Carninci P."/>
            <person name="Kasukawa T."/>
            <person name="Katayama S."/>
            <person name="Gough J."/>
            <person name="Frith M.C."/>
            <person name="Maeda N."/>
            <person name="Oyama R."/>
            <person name="Ravasi T."/>
            <person name="Lenhard B."/>
            <person name="Wells C."/>
            <person name="Kodzius R."/>
            <person name="Shimokawa K."/>
            <person name="Bajic V.B."/>
            <person name="Brenner S.E."/>
            <person name="Batalov S."/>
            <person name="Forrest A.R."/>
            <person name="Zavolan M."/>
            <person name="Davis M.J."/>
            <person name="Wilming L.G."/>
            <person name="Aidinis V."/>
            <person name="Allen J.E."/>
            <person name="Ambesi-Impiombato A."/>
            <person name="Apweiler R."/>
            <person name="Aturaliya R.N."/>
            <person name="Bailey T.L."/>
            <person name="Bansal M."/>
            <person name="Baxter L."/>
            <person name="Beisel K.W."/>
            <person name="Bersano T."/>
            <person name="Bono H."/>
            <person name="Chalk A.M."/>
            <person name="Chiu K.P."/>
            <person name="Choudhary V."/>
            <person name="Christoffels A."/>
            <person name="Clutterbuck D.R."/>
            <person name="Crowe M.L."/>
            <person name="Dalla E."/>
            <person name="Dalrymple B.P."/>
            <person name="de Bono B."/>
            <person name="Della Gatta G."/>
            <person name="di Bernardo D."/>
            <person name="Down T."/>
            <person name="Engstrom P."/>
            <person name="Fagiolini M."/>
            <person name="Faulkner G."/>
            <person name="Fletcher C.F."/>
            <person name="Fukushima T."/>
            <person name="Furuno M."/>
            <person name="Futaki S."/>
            <person name="Gariboldi M."/>
            <person name="Georgii-Hemming P."/>
            <person name="Gingeras T.R."/>
            <person name="Gojobori T."/>
            <person name="Green R.E."/>
            <person name="Gustincich S."/>
            <person name="Harbers M."/>
            <person name="Hayashi Y."/>
            <person name="Hensch T.K."/>
            <person name="Hirokawa N."/>
            <person name="Hill D."/>
            <person name="Huminiecki L."/>
            <person name="Iacono M."/>
            <person name="Ikeo K."/>
            <person name="Iwama A."/>
            <person name="Ishikawa T."/>
            <person name="Jakt M."/>
            <person name="Kanapin A."/>
            <person name="Katoh M."/>
            <person name="Kawasawa Y."/>
            <person name="Kelso J."/>
            <person name="Kitamura H."/>
            <person name="Kitano H."/>
            <person name="Kollias G."/>
            <person name="Krishnan S.P."/>
            <person name="Kruger A."/>
            <person name="Kummerfeld S.K."/>
            <person name="Kurochkin I.V."/>
            <person name="Lareau L.F."/>
            <person name="Lazarevic D."/>
            <person name="Lipovich L."/>
            <person name="Liu J."/>
            <person name="Liuni S."/>
            <person name="McWilliam S."/>
            <person name="Madan Babu M."/>
            <person name="Madera M."/>
            <person name="Marchionni L."/>
            <person name="Matsuda H."/>
            <person name="Matsuzawa S."/>
            <person name="Miki H."/>
            <person name="Mignone F."/>
            <person name="Miyake S."/>
            <person name="Morris K."/>
            <person name="Mottagui-Tabar S."/>
            <person name="Mulder N."/>
            <person name="Nakano N."/>
            <person name="Nakauchi H."/>
            <person name="Ng P."/>
            <person name="Nilsson R."/>
            <person name="Nishiguchi S."/>
            <person name="Nishikawa S."/>
            <person name="Nori F."/>
            <person name="Ohara O."/>
            <person name="Okazaki Y."/>
            <person name="Orlando V."/>
            <person name="Pang K.C."/>
            <person name="Pavan W.J."/>
            <person name="Pavesi G."/>
            <person name="Pesole G."/>
            <person name="Petrovsky N."/>
            <person name="Piazza S."/>
            <person name="Reed J."/>
            <person name="Reid J.F."/>
            <person name="Ring B.Z."/>
            <person name="Ringwald M."/>
            <person name="Rost B."/>
            <person name="Ruan Y."/>
            <person name="Salzberg S.L."/>
            <person name="Sandelin A."/>
            <person name="Schneider C."/>
            <person name="Schoenbach C."/>
            <person name="Sekiguchi K."/>
            <person name="Semple C.A."/>
            <person name="Seno S."/>
            <person name="Sessa L."/>
            <person name="Sheng Y."/>
            <person name="Shibata Y."/>
            <person name="Shimada H."/>
            <person name="Shimada K."/>
            <person name="Silva D."/>
            <person name="Sinclair B."/>
            <person name="Sperling S."/>
            <person name="Stupka E."/>
            <person name="Sugiura K."/>
            <person name="Sultana R."/>
            <person name="Takenaka Y."/>
            <person name="Taki K."/>
            <person name="Tammoja K."/>
            <person name="Tan S.L."/>
            <person name="Tang S."/>
            <person name="Taylor M.S."/>
            <person name="Tegner J."/>
            <person name="Teichmann S.A."/>
            <person name="Ueda H.R."/>
            <person name="van Nimwegen E."/>
            <person name="Verardo R."/>
            <person name="Wei C.L."/>
            <person name="Yagi K."/>
            <person name="Yamanishi H."/>
            <person name="Zabarovsky E."/>
            <person name="Zhu S."/>
            <person name="Zimmer A."/>
            <person name="Hide W."/>
            <person name="Bult C."/>
            <person name="Grimmond S.M."/>
            <person name="Teasdale R.D."/>
            <person name="Liu E.T."/>
            <person name="Brusic V."/>
            <person name="Quackenbush J."/>
            <person name="Wahlestedt C."/>
            <person name="Mattick J.S."/>
            <person name="Hume D.A."/>
            <person name="Kai C."/>
            <person name="Sasaki D."/>
            <person name="Tomaru Y."/>
            <person name="Fukuda S."/>
            <person name="Kanamori-Katayama M."/>
            <person name="Suzuki M."/>
            <person name="Aoki J."/>
            <person name="Arakawa T."/>
            <person name="Iida J."/>
            <person name="Imamura K."/>
            <person name="Itoh M."/>
            <person name="Kato T."/>
            <person name="Kawaji H."/>
            <person name="Kawagashira N."/>
            <person name="Kawashima T."/>
            <person name="Kojima M."/>
            <person name="Kondo S."/>
            <person name="Konno H."/>
            <person name="Nakano K."/>
            <person name="Ninomiya N."/>
            <person name="Nishio T."/>
            <person name="Okada M."/>
            <person name="Plessy C."/>
            <person name="Shibata K."/>
            <person name="Shiraki T."/>
            <person name="Suzuki S."/>
            <person name="Tagami M."/>
            <person name="Waki K."/>
            <person name="Watahiki A."/>
            <person name="Okamura-Oho Y."/>
            <person name="Suzuki H."/>
            <person name="Kawai J."/>
            <person name="Hayashizaki Y."/>
        </authorList>
    </citation>
    <scope>NUCLEOTIDE SEQUENCE [LARGE SCALE MRNA] (ISOFORMS 1 AND 2)</scope>
    <source>
        <strain>C57BL/6J</strain>
        <tissue>Embryo</tissue>
        <tissue>Skin</tissue>
        <tissue>Urinary bladder</tissue>
    </source>
</reference>
<reference key="5">
    <citation type="journal article" date="2004" name="Genome Res.">
        <title>The status, quality, and expansion of the NIH full-length cDNA project: the Mammalian Gene Collection (MGC).</title>
        <authorList>
            <consortium name="The MGC Project Team"/>
        </authorList>
    </citation>
    <scope>NUCLEOTIDE SEQUENCE [LARGE SCALE MRNA] (ISOFORM 1)</scope>
    <source>
        <strain>C3H/He</strain>
        <tissue>Mesenchymal cell</tissue>
    </source>
</reference>
<reference key="6">
    <citation type="journal article" date="1995" name="J. Biol. Chem.">
        <title>Caveolin isoforms differ in their N-terminal protein sequence and subcellular distribution. Identification and epitope mapping of an isoform-specific monoclonal antibody probe.</title>
        <authorList>
            <person name="Scherer P.E."/>
            <person name="Tang Z."/>
            <person name="Chun M."/>
            <person name="Sargiacomo M."/>
            <person name="Lodish H.F."/>
            <person name="Lisanti M.P."/>
        </authorList>
    </citation>
    <scope>PROTEIN SEQUENCE OF 5-26; 47-77 AND 165-176</scope>
</reference>
<reference key="7">
    <citation type="journal article" date="2000" name="J. Biol. Chem.">
        <title>Caveolin-1 expression inhibits Wnt/beta-catenin/Lef-1 signaling by recruiting beta-catenin to caveolae membrane domains.</title>
        <authorList>
            <person name="Galbiati F."/>
            <person name="Volonte D."/>
            <person name="Brown A.M."/>
            <person name="Weinstein D.E."/>
            <person name="Ben-Ze'ev A."/>
            <person name="Pestell R.G."/>
            <person name="Lisanti M.P."/>
        </authorList>
    </citation>
    <scope>FUNCTION</scope>
</reference>
<reference key="8">
    <citation type="journal article" date="2002" name="J. Biol. Chem.">
        <title>The insulin receptor catalyzes the tyrosine phosphorylation of caveolin-1.</title>
        <authorList>
            <person name="Kimura A."/>
            <person name="Mora S."/>
            <person name="Shigematsu S."/>
            <person name="Pessin J.E."/>
            <person name="Saltiel A.R."/>
        </authorList>
    </citation>
    <scope>PHOSPHORYLATION AT TYR-14</scope>
</reference>
<reference key="9">
    <citation type="journal article" date="2003" name="Cell. Signal.">
        <title>c-Abl is required for oxidative stress-induced phosphorylation of caveolin-1 on tyrosine 14.</title>
        <authorList>
            <person name="Sanguinetti A.R."/>
            <person name="Mastick C.C."/>
        </authorList>
    </citation>
    <scope>PHOSPHORYLATION AT TYR-14</scope>
</reference>
<reference key="10">
    <citation type="journal article" date="2005" name="Nat. Biotechnol.">
        <title>Immunoaffinity profiling of tyrosine phosphorylation in cancer cells.</title>
        <authorList>
            <person name="Rush J."/>
            <person name="Moritz A."/>
            <person name="Lee K.A."/>
            <person name="Guo A."/>
            <person name="Goss V.L."/>
            <person name="Spek E.J."/>
            <person name="Zhang H."/>
            <person name="Zha X.-M."/>
            <person name="Polakiewicz R.D."/>
            <person name="Comb M.J."/>
        </authorList>
    </citation>
    <scope>IDENTIFICATION BY MASS SPECTROMETRY [LARGE SCALE ANALYSIS]</scope>
</reference>
<reference key="11">
    <citation type="journal article" date="2006" name="J. Biol. Chem.">
        <title>A functional interaction between sprouty proteins and caveolin-1.</title>
        <authorList>
            <person name="Cabrita M.A."/>
            <person name="Jaeggi F."/>
            <person name="Widjaja S.P."/>
            <person name="Christofori G."/>
        </authorList>
    </citation>
    <scope>INTERACTION WITH SPRY1; SPRY2; SPRY3 AND SPRY4</scope>
</reference>
<reference key="12">
    <citation type="journal article" date="2009" name="J. Cell Biol.">
        <title>MURC/Cavin-4 and cavin family members form tissue-specific caveolar complexes.</title>
        <authorList>
            <person name="Bastiani M."/>
            <person name="Liu L."/>
            <person name="Hill M.M."/>
            <person name="Jedrychowski M.P."/>
            <person name="Nixon S.J."/>
            <person name="Lo H.P."/>
            <person name="Abankwa D."/>
            <person name="Luetterforst R."/>
            <person name="Fernandez-Rojo M."/>
            <person name="Breen M.R."/>
            <person name="Gygi S.P."/>
            <person name="Vinten J."/>
            <person name="Walser P.J."/>
            <person name="North K.N."/>
            <person name="Hancock J.F."/>
            <person name="Pilch P.F."/>
            <person name="Parton R.G."/>
        </authorList>
    </citation>
    <scope>FUNCTION</scope>
    <scope>INTERACTION WITH CAVIN1</scope>
    <scope>TISSUE SPECIFICITY</scope>
    <scope>SUBCELLULAR LOCATION</scope>
</reference>
<reference key="13">
    <citation type="journal article" date="2009" name="Mol. Cell. Proteomics">
        <title>Large scale localization of protein phosphorylation by use of electron capture dissociation mass spectrometry.</title>
        <authorList>
            <person name="Sweet S.M."/>
            <person name="Bailey C.M."/>
            <person name="Cunningham D.L."/>
            <person name="Heath J.K."/>
            <person name="Cooper H.J."/>
        </authorList>
    </citation>
    <scope>IDENTIFICATION BY MASS SPECTROMETRY [LARGE SCALE ANALYSIS]</scope>
    <source>
        <tissue>Embryonic fibroblast</tissue>
    </source>
</reference>
<reference key="14">
    <citation type="journal article" date="2010" name="Cell">
        <title>A tissue-specific atlas of mouse protein phosphorylation and expression.</title>
        <authorList>
            <person name="Huttlin E.L."/>
            <person name="Jedrychowski M.P."/>
            <person name="Elias J.E."/>
            <person name="Goswami T."/>
            <person name="Rad R."/>
            <person name="Beausoleil S.A."/>
            <person name="Villen J."/>
            <person name="Haas W."/>
            <person name="Sowa M.E."/>
            <person name="Gygi S.P."/>
        </authorList>
    </citation>
    <scope>PHOSPHORYLATION [LARGE SCALE ANALYSIS] AT SER-9 AND TYR-14</scope>
    <scope>IDENTIFICATION BY MASS SPECTROMETRY [LARGE SCALE ANALYSIS]</scope>
    <source>
        <tissue>Brown adipose tissue</tissue>
        <tissue>Heart</tissue>
        <tissue>Kidney</tissue>
        <tissue>Lung</tissue>
        <tissue>Pancreas</tissue>
        <tissue>Spleen</tissue>
        <tissue>Testis</tissue>
    </source>
</reference>
<reference key="15">
    <citation type="journal article" date="2011" name="J. Cell Sci.">
        <title>Essential role of PACSIN2/syndapin-II in caveolae membrane sculpting.</title>
        <authorList>
            <person name="Senju Y."/>
            <person name="Itoh Y."/>
            <person name="Takano K."/>
            <person name="Hamada S."/>
            <person name="Suetsugu S."/>
        </authorList>
    </citation>
    <scope>INTERACTION WITH PACSIN2</scope>
    <scope>SUBCELLULAR LOCATION</scope>
</reference>
<reference key="16">
    <citation type="journal article" date="2013" name="Mol. Cell">
        <title>SIRT5-mediated lysine desuccinylation impacts diverse metabolic pathways.</title>
        <authorList>
            <person name="Park J."/>
            <person name="Chen Y."/>
            <person name="Tishkoff D.X."/>
            <person name="Peng C."/>
            <person name="Tan M."/>
            <person name="Dai L."/>
            <person name="Xie Z."/>
            <person name="Zhang Y."/>
            <person name="Zwaans B.M."/>
            <person name="Skinner M.E."/>
            <person name="Lombard D.B."/>
            <person name="Zhao Y."/>
        </authorList>
    </citation>
    <scope>ACETYLATION [LARGE SCALE ANALYSIS] AT SER-2 AND LYS-5</scope>
    <scope>CLEAVAGE OF INITIATOR METHIONINE [LARGE SCALE ANALYSIS]</scope>
    <scope>IDENTIFICATION BY MASS SPECTROMETRY [LARGE SCALE ANALYSIS]</scope>
    <source>
        <tissue>Embryonic fibroblast</tissue>
    </source>
</reference>
<reference key="17">
    <citation type="journal article" date="2018" name="Acta Biochim. Biophys. Sin.">
        <title>Fam198a, a member of secreted kinase, secrets through caveolae biogenesis pathway.</title>
        <authorList>
            <person name="Wei Z."/>
            <person name="Liu T."/>
            <person name="Lei J."/>
            <person name="Wu Y."/>
            <person name="Wang S."/>
            <person name="Liao K."/>
        </authorList>
    </citation>
    <scope>FUNCTION</scope>
</reference>
<reference key="18">
    <citation type="journal article" date="2021" name="Nat. Chem. Biol.">
        <title>A proteome-wide map of 20(S)-hydroxycholesterol interactors in cell membranes.</title>
        <authorList>
            <person name="Cheng Y.S."/>
            <person name="Zhang T."/>
            <person name="Ma X."/>
            <person name="Pratuangtham S."/>
            <person name="Zhang G.C."/>
            <person name="Ondrus A.A."/>
            <person name="Mafi A."/>
            <person name="Lomenick B."/>
            <person name="Jones J.J."/>
            <person name="Ondrus A.E."/>
        </authorList>
    </citation>
    <scope>FUNCTION</scope>
</reference>
<evidence type="ECO:0000250" key="1"/>
<evidence type="ECO:0000250" key="2">
    <source>
        <dbReference type="UniProtKB" id="P33724"/>
    </source>
</evidence>
<evidence type="ECO:0000250" key="3">
    <source>
        <dbReference type="UniProtKB" id="P41350"/>
    </source>
</evidence>
<evidence type="ECO:0000250" key="4">
    <source>
        <dbReference type="UniProtKB" id="Q03135"/>
    </source>
</evidence>
<evidence type="ECO:0000250" key="5">
    <source>
        <dbReference type="UniProtKB" id="Q2IBA5"/>
    </source>
</evidence>
<evidence type="ECO:0000255" key="6"/>
<evidence type="ECO:0000269" key="7">
    <source>
    </source>
</evidence>
<evidence type="ECO:0000269" key="8">
    <source>
    </source>
</evidence>
<evidence type="ECO:0000269" key="9">
    <source>
    </source>
</evidence>
<evidence type="ECO:0000269" key="10">
    <source>
    </source>
</evidence>
<evidence type="ECO:0000269" key="11">
    <source>
    </source>
</evidence>
<evidence type="ECO:0000269" key="12">
    <source>
    </source>
</evidence>
<evidence type="ECO:0000269" key="13">
    <source>
    </source>
</evidence>
<evidence type="ECO:0000303" key="14">
    <source>
    </source>
</evidence>
<evidence type="ECO:0000303" key="15">
    <source>
    </source>
</evidence>
<evidence type="ECO:0000305" key="16"/>
<evidence type="ECO:0007744" key="17">
    <source>
    </source>
</evidence>
<evidence type="ECO:0007744" key="18">
    <source>
    </source>
</evidence>
<name>CAV1_MOUSE</name>
<organism>
    <name type="scientific">Mus musculus</name>
    <name type="common">Mouse</name>
    <dbReference type="NCBI Taxonomy" id="10090"/>
    <lineage>
        <taxon>Eukaryota</taxon>
        <taxon>Metazoa</taxon>
        <taxon>Chordata</taxon>
        <taxon>Craniata</taxon>
        <taxon>Vertebrata</taxon>
        <taxon>Euteleostomi</taxon>
        <taxon>Mammalia</taxon>
        <taxon>Eutheria</taxon>
        <taxon>Euarchontoglires</taxon>
        <taxon>Glires</taxon>
        <taxon>Rodentia</taxon>
        <taxon>Myomorpha</taxon>
        <taxon>Muroidea</taxon>
        <taxon>Muridae</taxon>
        <taxon>Murinae</taxon>
        <taxon>Mus</taxon>
        <taxon>Mus</taxon>
    </lineage>
</organism>
<keyword id="KW-0007">Acetylation</keyword>
<keyword id="KW-0024">Alternative initiation</keyword>
<keyword id="KW-1003">Cell membrane</keyword>
<keyword id="KW-0903">Direct protein sequencing</keyword>
<keyword id="KW-0333">Golgi apparatus</keyword>
<keyword id="KW-1017">Isopeptide bond</keyword>
<keyword id="KW-0449">Lipoprotein</keyword>
<keyword id="KW-0472">Membrane</keyword>
<keyword id="KW-0564">Palmitate</keyword>
<keyword id="KW-0597">Phosphoprotein</keyword>
<keyword id="KW-1185">Reference proteome</keyword>
<keyword id="KW-0832">Ubl conjugation</keyword>
<dbReference type="EMBL" id="U07645">
    <property type="protein sequence ID" value="AAA85784.1"/>
    <property type="molecule type" value="mRNA"/>
</dbReference>
<dbReference type="EMBL" id="AB029929">
    <property type="protein sequence ID" value="BAA89461.1"/>
    <property type="molecule type" value="mRNA"/>
</dbReference>
<dbReference type="EMBL" id="AB029930">
    <property type="protein sequence ID" value="BAA89462.1"/>
    <property type="molecule type" value="mRNA"/>
</dbReference>
<dbReference type="EMBL" id="AB029931">
    <property type="protein sequence ID" value="BAA89463.1"/>
    <property type="molecule type" value="Genomic_DNA"/>
</dbReference>
<dbReference type="EMBL" id="AY439333">
    <property type="protein sequence ID" value="AAR99702.1"/>
    <property type="molecule type" value="mRNA"/>
</dbReference>
<dbReference type="EMBL" id="AK003489">
    <property type="protein sequence ID" value="BAB22817.1"/>
    <property type="molecule type" value="mRNA"/>
</dbReference>
<dbReference type="EMBL" id="AK028738">
    <property type="protein sequence ID" value="BAC26091.1"/>
    <property type="molecule type" value="mRNA"/>
</dbReference>
<dbReference type="EMBL" id="AK035592">
    <property type="protein sequence ID" value="BAC29118.1"/>
    <property type="molecule type" value="mRNA"/>
</dbReference>
<dbReference type="EMBL" id="AK090074">
    <property type="protein sequence ID" value="BAC41079.1"/>
    <property type="molecule type" value="mRNA"/>
</dbReference>
<dbReference type="EMBL" id="BC038280">
    <property type="protein sequence ID" value="AAH38280.1"/>
    <property type="molecule type" value="mRNA"/>
</dbReference>
<dbReference type="EMBL" id="BC052859">
    <property type="protein sequence ID" value="AAH52859.1"/>
    <property type="molecule type" value="mRNA"/>
</dbReference>
<dbReference type="CCDS" id="CCDS19924.1">
    <molecule id="P49817-1"/>
</dbReference>
<dbReference type="CCDS" id="CCDS57410.1">
    <molecule id="P49817-2"/>
</dbReference>
<dbReference type="PIR" id="I48976">
    <property type="entry name" value="I48976"/>
</dbReference>
<dbReference type="RefSeq" id="NP_001229993.1">
    <molecule id="P49817-2"/>
    <property type="nucleotide sequence ID" value="NM_001243064.2"/>
</dbReference>
<dbReference type="RefSeq" id="NP_001396487.1">
    <molecule id="P49817-1"/>
    <property type="nucleotide sequence ID" value="NM_001409558.1"/>
</dbReference>
<dbReference type="RefSeq" id="NP_001396488.1">
    <molecule id="P49817-2"/>
    <property type="nucleotide sequence ID" value="NM_001409559.1"/>
</dbReference>
<dbReference type="RefSeq" id="NP_001396489.1">
    <molecule id="P49817-2"/>
    <property type="nucleotide sequence ID" value="NM_001409560.1"/>
</dbReference>
<dbReference type="RefSeq" id="NP_001396490.1">
    <molecule id="P49817-2"/>
    <property type="nucleotide sequence ID" value="NM_001409561.1"/>
</dbReference>
<dbReference type="RefSeq" id="NP_001396491.1">
    <molecule id="P49817-2"/>
    <property type="nucleotide sequence ID" value="NM_001409562.1"/>
</dbReference>
<dbReference type="RefSeq" id="NP_001396492.1">
    <molecule id="P49817-2"/>
    <property type="nucleotide sequence ID" value="NM_001409563.1"/>
</dbReference>
<dbReference type="RefSeq" id="NP_031642.1">
    <molecule id="P49817-1"/>
    <property type="nucleotide sequence ID" value="NM_007616.5"/>
</dbReference>
<dbReference type="RefSeq" id="XP_006505037.1">
    <property type="nucleotide sequence ID" value="XM_006504974.1"/>
</dbReference>
<dbReference type="RefSeq" id="XP_006505038.1">
    <property type="nucleotide sequence ID" value="XM_006504975.1"/>
</dbReference>
<dbReference type="RefSeq" id="XP_006505039.1">
    <property type="nucleotide sequence ID" value="XM_006504976.1"/>
</dbReference>
<dbReference type="SMR" id="P49817"/>
<dbReference type="BioGRID" id="198514">
    <property type="interactions" value="14"/>
</dbReference>
<dbReference type="CORUM" id="P49817"/>
<dbReference type="DIP" id="DIP-35140N"/>
<dbReference type="FunCoup" id="P49817">
    <property type="interactions" value="912"/>
</dbReference>
<dbReference type="IntAct" id="P49817">
    <property type="interactions" value="18"/>
</dbReference>
<dbReference type="MINT" id="P49817"/>
<dbReference type="STRING" id="10090.ENSMUSP00000007799"/>
<dbReference type="GlyGen" id="P49817">
    <property type="glycosylation" value="1 site, 1 O-linked glycan (1 site)"/>
</dbReference>
<dbReference type="iPTMnet" id="P49817"/>
<dbReference type="PhosphoSitePlus" id="P49817"/>
<dbReference type="SwissPalm" id="P49817"/>
<dbReference type="jPOST" id="P49817"/>
<dbReference type="PaxDb" id="10090-ENSMUSP00000007799"/>
<dbReference type="PeptideAtlas" id="P49817"/>
<dbReference type="ProteomicsDB" id="265553">
    <molecule id="P49817-1"/>
</dbReference>
<dbReference type="ProteomicsDB" id="265554">
    <molecule id="P49817-2"/>
</dbReference>
<dbReference type="Pumba" id="P49817"/>
<dbReference type="Antibodypedia" id="3530">
    <property type="antibodies" value="1220 antibodies from 47 providers"/>
</dbReference>
<dbReference type="DNASU" id="12389"/>
<dbReference type="Ensembl" id="ENSMUST00000007799.13">
    <molecule id="P49817-1"/>
    <property type="protein sequence ID" value="ENSMUSP00000007799.7"/>
    <property type="gene ID" value="ENSMUSG00000007655.17"/>
</dbReference>
<dbReference type="Ensembl" id="ENSMUST00000115453.2">
    <molecule id="P49817-2"/>
    <property type="protein sequence ID" value="ENSMUSP00000111113.2"/>
    <property type="gene ID" value="ENSMUSG00000007655.17"/>
</dbReference>
<dbReference type="Ensembl" id="ENSMUST00000115454.2">
    <molecule id="P49817-2"/>
    <property type="protein sequence ID" value="ENSMUSP00000111114.2"/>
    <property type="gene ID" value="ENSMUSG00000007655.17"/>
</dbReference>
<dbReference type="Ensembl" id="ENSMUST00000115456.6">
    <molecule id="P49817-1"/>
    <property type="protein sequence ID" value="ENSMUSP00000111116.2"/>
    <property type="gene ID" value="ENSMUSG00000007655.17"/>
</dbReference>
<dbReference type="GeneID" id="12389"/>
<dbReference type="KEGG" id="mmu:12389"/>
<dbReference type="UCSC" id="uc009azo.2">
    <molecule id="P49817-1"/>
    <property type="organism name" value="mouse"/>
</dbReference>
<dbReference type="AGR" id="MGI:102709"/>
<dbReference type="CTD" id="857"/>
<dbReference type="MGI" id="MGI:102709">
    <property type="gene designation" value="Cav1"/>
</dbReference>
<dbReference type="VEuPathDB" id="HostDB:ENSMUSG00000007655"/>
<dbReference type="eggNOG" id="ENOG502QUK5">
    <property type="taxonomic scope" value="Eukaryota"/>
</dbReference>
<dbReference type="GeneTree" id="ENSGT00950000183006"/>
<dbReference type="HOGENOM" id="CLU_102582_0_0_1"/>
<dbReference type="InParanoid" id="P49817"/>
<dbReference type="OMA" id="MSGSKYV"/>
<dbReference type="OrthoDB" id="5917823at2759"/>
<dbReference type="PhylomeDB" id="P49817"/>
<dbReference type="TreeFam" id="TF315736"/>
<dbReference type="Reactome" id="R-MMU-203615">
    <property type="pathway name" value="eNOS activation"/>
</dbReference>
<dbReference type="Reactome" id="R-MMU-203641">
    <property type="pathway name" value="NOSTRIN mediated eNOS trafficking"/>
</dbReference>
<dbReference type="Reactome" id="R-MMU-210991">
    <property type="pathway name" value="Basigin interactions"/>
</dbReference>
<dbReference type="Reactome" id="R-MMU-4641262">
    <property type="pathway name" value="Disassembly of the destruction complex and recruitment of AXIN to the membrane"/>
</dbReference>
<dbReference type="Reactome" id="R-MMU-5218920">
    <property type="pathway name" value="VEGFR2 mediated vascular permeability"/>
</dbReference>
<dbReference type="Reactome" id="R-MMU-8980692">
    <property type="pathway name" value="RHOA GTPase cycle"/>
</dbReference>
<dbReference type="Reactome" id="R-MMU-9009391">
    <property type="pathway name" value="Extra-nuclear estrogen signaling"/>
</dbReference>
<dbReference type="Reactome" id="R-MMU-9013026">
    <property type="pathway name" value="RHOB GTPase cycle"/>
</dbReference>
<dbReference type="Reactome" id="R-MMU-9013106">
    <property type="pathway name" value="RHOC GTPase cycle"/>
</dbReference>
<dbReference type="Reactome" id="R-MMU-9013148">
    <property type="pathway name" value="CDC42 GTPase cycle"/>
</dbReference>
<dbReference type="Reactome" id="R-MMU-9013149">
    <property type="pathway name" value="RAC1 GTPase cycle"/>
</dbReference>
<dbReference type="Reactome" id="R-MMU-9013404">
    <property type="pathway name" value="RAC2 GTPase cycle"/>
</dbReference>
<dbReference type="Reactome" id="R-MMU-9013405">
    <property type="pathway name" value="RHOD GTPase cycle"/>
</dbReference>
<dbReference type="Reactome" id="R-MMU-9013406">
    <property type="pathway name" value="RHOQ GTPase cycle"/>
</dbReference>
<dbReference type="Reactome" id="R-MMU-9013407">
    <property type="pathway name" value="RHOH GTPase cycle"/>
</dbReference>
<dbReference type="Reactome" id="R-MMU-9013408">
    <property type="pathway name" value="RHOG GTPase cycle"/>
</dbReference>
<dbReference type="Reactome" id="R-MMU-9013423">
    <property type="pathway name" value="RAC3 GTPase cycle"/>
</dbReference>
<dbReference type="Reactome" id="R-MMU-9035034">
    <property type="pathway name" value="RHOF GTPase cycle"/>
</dbReference>
<dbReference type="Reactome" id="R-MMU-9696264">
    <property type="pathway name" value="RND3 GTPase cycle"/>
</dbReference>
<dbReference type="Reactome" id="R-MMU-9696270">
    <property type="pathway name" value="RND2 GTPase cycle"/>
</dbReference>
<dbReference type="Reactome" id="R-MMU-9696273">
    <property type="pathway name" value="RND1 GTPase cycle"/>
</dbReference>
<dbReference type="BioGRID-ORCS" id="12389">
    <property type="hits" value="0 hits in 78 CRISPR screens"/>
</dbReference>
<dbReference type="ChiTaRS" id="Cav1">
    <property type="organism name" value="mouse"/>
</dbReference>
<dbReference type="PRO" id="PR:P49817"/>
<dbReference type="Proteomes" id="UP000000589">
    <property type="component" value="Chromosome 6"/>
</dbReference>
<dbReference type="RNAct" id="P49817">
    <property type="molecule type" value="protein"/>
</dbReference>
<dbReference type="Bgee" id="ENSMUSG00000007655">
    <property type="expression patterns" value="Expressed in left lung lobe and 234 other cell types or tissues"/>
</dbReference>
<dbReference type="ExpressionAtlas" id="P49817">
    <property type="expression patterns" value="baseline and differential"/>
</dbReference>
<dbReference type="GO" id="GO:0002080">
    <property type="term" value="C:acrosomal membrane"/>
    <property type="evidence" value="ECO:0000314"/>
    <property type="project" value="MGI"/>
</dbReference>
<dbReference type="GO" id="GO:0005901">
    <property type="term" value="C:caveola"/>
    <property type="evidence" value="ECO:0000314"/>
    <property type="project" value="BHF-UCL"/>
</dbReference>
<dbReference type="GO" id="GO:0002095">
    <property type="term" value="C:caveolar macromolecular signaling complex"/>
    <property type="evidence" value="ECO:0000314"/>
    <property type="project" value="MGI"/>
</dbReference>
<dbReference type="GO" id="GO:0005938">
    <property type="term" value="C:cell cortex"/>
    <property type="evidence" value="ECO:0000314"/>
    <property type="project" value="MGI"/>
</dbReference>
<dbReference type="GO" id="GO:0005929">
    <property type="term" value="C:cilium"/>
    <property type="evidence" value="ECO:0000314"/>
    <property type="project" value="MGI"/>
</dbReference>
<dbReference type="GO" id="GO:0031410">
    <property type="term" value="C:cytoplasmic vesicle"/>
    <property type="evidence" value="ECO:0000266"/>
    <property type="project" value="MGI"/>
</dbReference>
<dbReference type="GO" id="GO:0005783">
    <property type="term" value="C:endoplasmic reticulum"/>
    <property type="evidence" value="ECO:0000314"/>
    <property type="project" value="MGI"/>
</dbReference>
<dbReference type="GO" id="GO:0005768">
    <property type="term" value="C:endosome"/>
    <property type="evidence" value="ECO:0000250"/>
    <property type="project" value="UniProtKB"/>
</dbReference>
<dbReference type="GO" id="GO:0005925">
    <property type="term" value="C:focal adhesion"/>
    <property type="evidence" value="ECO:0007669"/>
    <property type="project" value="Ensembl"/>
</dbReference>
<dbReference type="GO" id="GO:0005794">
    <property type="term" value="C:Golgi apparatus"/>
    <property type="evidence" value="ECO:0000314"/>
    <property type="project" value="MGI"/>
</dbReference>
<dbReference type="GO" id="GO:0000139">
    <property type="term" value="C:Golgi membrane"/>
    <property type="evidence" value="ECO:0000250"/>
    <property type="project" value="HGNC-UCL"/>
</dbReference>
<dbReference type="GO" id="GO:0016020">
    <property type="term" value="C:membrane"/>
    <property type="evidence" value="ECO:0000314"/>
    <property type="project" value="MGI"/>
</dbReference>
<dbReference type="GO" id="GO:0045121">
    <property type="term" value="C:membrane raft"/>
    <property type="evidence" value="ECO:0000314"/>
    <property type="project" value="MGI"/>
</dbReference>
<dbReference type="GO" id="GO:0048471">
    <property type="term" value="C:perinuclear region of cytoplasm"/>
    <property type="evidence" value="ECO:0000314"/>
    <property type="project" value="MGI"/>
</dbReference>
<dbReference type="GO" id="GO:0005886">
    <property type="term" value="C:plasma membrane"/>
    <property type="evidence" value="ECO:0000314"/>
    <property type="project" value="UniProtKB"/>
</dbReference>
<dbReference type="GO" id="GO:0032991">
    <property type="term" value="C:protein-containing complex"/>
    <property type="evidence" value="ECO:0000314"/>
    <property type="project" value="BHF-UCL"/>
</dbReference>
<dbReference type="GO" id="GO:0051117">
    <property type="term" value="F:ATPase binding"/>
    <property type="evidence" value="ECO:0007669"/>
    <property type="project" value="Ensembl"/>
</dbReference>
<dbReference type="GO" id="GO:0042802">
    <property type="term" value="F:identical protein binding"/>
    <property type="evidence" value="ECO:0000353"/>
    <property type="project" value="MGI"/>
</dbReference>
<dbReference type="GO" id="GO:0070320">
    <property type="term" value="F:inward rectifier potassium channel inhibitor activity"/>
    <property type="evidence" value="ECO:0007669"/>
    <property type="project" value="Ensembl"/>
</dbReference>
<dbReference type="GO" id="GO:0060090">
    <property type="term" value="F:molecular adaptor activity"/>
    <property type="evidence" value="ECO:0000314"/>
    <property type="project" value="BHF-UCL"/>
</dbReference>
<dbReference type="GO" id="GO:0050998">
    <property type="term" value="F:nitric-oxide synthase binding"/>
    <property type="evidence" value="ECO:0000353"/>
    <property type="project" value="BHF-UCL"/>
</dbReference>
<dbReference type="GO" id="GO:0008142">
    <property type="term" value="F:oxysterol binding"/>
    <property type="evidence" value="ECO:0000315"/>
    <property type="project" value="UniProtKB"/>
</dbReference>
<dbReference type="GO" id="GO:0016504">
    <property type="term" value="F:peptidase activator activity"/>
    <property type="evidence" value="ECO:0000315"/>
    <property type="project" value="MGI"/>
</dbReference>
<dbReference type="GO" id="GO:0046982">
    <property type="term" value="F:protein heterodimerization activity"/>
    <property type="evidence" value="ECO:0000353"/>
    <property type="project" value="BHF-UCL"/>
</dbReference>
<dbReference type="GO" id="GO:0019901">
    <property type="term" value="F:protein kinase binding"/>
    <property type="evidence" value="ECO:0000353"/>
    <property type="project" value="BHF-UCL"/>
</dbReference>
<dbReference type="GO" id="GO:0030292">
    <property type="term" value="F:protein tyrosine kinase inhibitor activity"/>
    <property type="evidence" value="ECO:0000315"/>
    <property type="project" value="BHF-UCL"/>
</dbReference>
<dbReference type="GO" id="GO:0044877">
    <property type="term" value="F:protein-containing complex binding"/>
    <property type="evidence" value="ECO:0007669"/>
    <property type="project" value="Ensembl"/>
</dbReference>
<dbReference type="GO" id="GO:0030674">
    <property type="term" value="F:protein-macromolecule adaptor activity"/>
    <property type="evidence" value="ECO:0000314"/>
    <property type="project" value="BHF-UCL"/>
</dbReference>
<dbReference type="GO" id="GO:0005102">
    <property type="term" value="F:signaling receptor binding"/>
    <property type="evidence" value="ECO:0007669"/>
    <property type="project" value="Ensembl"/>
</dbReference>
<dbReference type="GO" id="GO:0031267">
    <property type="term" value="F:small GTPase binding"/>
    <property type="evidence" value="ECO:0007669"/>
    <property type="project" value="Ensembl"/>
</dbReference>
<dbReference type="GO" id="GO:0044325">
    <property type="term" value="F:transmembrane transporter binding"/>
    <property type="evidence" value="ECO:0007669"/>
    <property type="project" value="Ensembl"/>
</dbReference>
<dbReference type="GO" id="GO:0001525">
    <property type="term" value="P:angiogenesis"/>
    <property type="evidence" value="ECO:0000316"/>
    <property type="project" value="MGI"/>
</dbReference>
<dbReference type="GO" id="GO:0038166">
    <property type="term" value="P:angiotensin-activated signaling pathway"/>
    <property type="evidence" value="ECO:0000316"/>
    <property type="project" value="BHF-UCL"/>
</dbReference>
<dbReference type="GO" id="GO:0097190">
    <property type="term" value="P:apoptotic signaling pathway"/>
    <property type="evidence" value="ECO:0007669"/>
    <property type="project" value="Ensembl"/>
</dbReference>
<dbReference type="GO" id="GO:0071711">
    <property type="term" value="P:basement membrane organization"/>
    <property type="evidence" value="ECO:0000315"/>
    <property type="project" value="MGI"/>
</dbReference>
<dbReference type="GO" id="GO:0055074">
    <property type="term" value="P:calcium ion homeostasis"/>
    <property type="evidence" value="ECO:0000315"/>
    <property type="project" value="MGI"/>
</dbReference>
<dbReference type="GO" id="GO:0006816">
    <property type="term" value="P:calcium ion transport"/>
    <property type="evidence" value="ECO:0000315"/>
    <property type="project" value="MGI"/>
</dbReference>
<dbReference type="GO" id="GO:0060070">
    <property type="term" value="P:canonical Wnt signaling pathway"/>
    <property type="evidence" value="ECO:0007669"/>
    <property type="project" value="Ensembl"/>
</dbReference>
<dbReference type="GO" id="GO:0070836">
    <property type="term" value="P:caveola assembly"/>
    <property type="evidence" value="ECO:0000314"/>
    <property type="project" value="MGI"/>
</dbReference>
<dbReference type="GO" id="GO:0072584">
    <property type="term" value="P:caveolin-mediated endocytosis"/>
    <property type="evidence" value="ECO:0000315"/>
    <property type="project" value="MGI"/>
</dbReference>
<dbReference type="GO" id="GO:0008283">
    <property type="term" value="P:cell population proliferation"/>
    <property type="evidence" value="ECO:0000315"/>
    <property type="project" value="MGI"/>
</dbReference>
<dbReference type="GO" id="GO:0071360">
    <property type="term" value="P:cellular response to exogenous dsRNA"/>
    <property type="evidence" value="ECO:0007669"/>
    <property type="project" value="Ensembl"/>
</dbReference>
<dbReference type="GO" id="GO:0071455">
    <property type="term" value="P:cellular response to hyperoxia"/>
    <property type="evidence" value="ECO:0007669"/>
    <property type="project" value="Ensembl"/>
</dbReference>
<dbReference type="GO" id="GO:0071218">
    <property type="term" value="P:cellular response to misfolded protein"/>
    <property type="evidence" value="ECO:0007669"/>
    <property type="project" value="Ensembl"/>
</dbReference>
<dbReference type="GO" id="GO:0071375">
    <property type="term" value="P:cellular response to peptide hormone stimulus"/>
    <property type="evidence" value="ECO:0000316"/>
    <property type="project" value="BHF-UCL"/>
</dbReference>
<dbReference type="GO" id="GO:0071560">
    <property type="term" value="P:cellular response to transforming growth factor beta stimulus"/>
    <property type="evidence" value="ECO:0000315"/>
    <property type="project" value="MGI"/>
</dbReference>
<dbReference type="GO" id="GO:0042632">
    <property type="term" value="P:cholesterol homeostasis"/>
    <property type="evidence" value="ECO:0000315"/>
    <property type="project" value="MGI"/>
</dbReference>
<dbReference type="GO" id="GO:0019221">
    <property type="term" value="P:cytokine-mediated signaling pathway"/>
    <property type="evidence" value="ECO:0000315"/>
    <property type="project" value="MGI"/>
</dbReference>
<dbReference type="GO" id="GO:0006897">
    <property type="term" value="P:endocytosis"/>
    <property type="evidence" value="ECO:0000304"/>
    <property type="project" value="MGI"/>
</dbReference>
<dbReference type="GO" id="GO:0001935">
    <property type="term" value="P:endothelial cell proliferation"/>
    <property type="evidence" value="ECO:0000315"/>
    <property type="project" value="MGI"/>
</dbReference>
<dbReference type="GO" id="GO:0051649">
    <property type="term" value="P:establishment of localization in cell"/>
    <property type="evidence" value="ECO:0000315"/>
    <property type="project" value="MGI"/>
</dbReference>
<dbReference type="GO" id="GO:0048144">
    <property type="term" value="P:fibroblast proliferation"/>
    <property type="evidence" value="ECO:0000315"/>
    <property type="project" value="MGI"/>
</dbReference>
<dbReference type="GO" id="GO:0002067">
    <property type="term" value="P:glandular epithelial cell differentiation"/>
    <property type="evidence" value="ECO:0000315"/>
    <property type="project" value="MGI"/>
</dbReference>
<dbReference type="GO" id="GO:0038016">
    <property type="term" value="P:insulin receptor internalization"/>
    <property type="evidence" value="ECO:0000315"/>
    <property type="project" value="CACAO"/>
</dbReference>
<dbReference type="GO" id="GO:0006874">
    <property type="term" value="P:intracellular calcium ion homeostasis"/>
    <property type="evidence" value="ECO:0000315"/>
    <property type="project" value="MGI"/>
</dbReference>
<dbReference type="GO" id="GO:0033484">
    <property type="term" value="P:intracellular nitric oxide homeostasis"/>
    <property type="evidence" value="ECO:0000315"/>
    <property type="project" value="MGI"/>
</dbReference>
<dbReference type="GO" id="GO:0007595">
    <property type="term" value="P:lactation"/>
    <property type="evidence" value="ECO:0000315"/>
    <property type="project" value="MGI"/>
</dbReference>
<dbReference type="GO" id="GO:0019915">
    <property type="term" value="P:lipid storage"/>
    <property type="evidence" value="ECO:0000315"/>
    <property type="project" value="MGI"/>
</dbReference>
<dbReference type="GO" id="GO:0030879">
    <property type="term" value="P:mammary gland development"/>
    <property type="evidence" value="ECO:0000315"/>
    <property type="project" value="MGI"/>
</dbReference>
<dbReference type="GO" id="GO:0060056">
    <property type="term" value="P:mammary gland involution"/>
    <property type="evidence" value="ECO:0000315"/>
    <property type="project" value="MGI"/>
</dbReference>
<dbReference type="GO" id="GO:0000165">
    <property type="term" value="P:MAPK cascade"/>
    <property type="evidence" value="ECO:0000315"/>
    <property type="project" value="MGI"/>
</dbReference>
<dbReference type="GO" id="GO:0051899">
    <property type="term" value="P:membrane depolarization"/>
    <property type="evidence" value="ECO:0000315"/>
    <property type="project" value="MGI"/>
</dbReference>
<dbReference type="GO" id="GO:0046716">
    <property type="term" value="P:muscle cell cellular homeostasis"/>
    <property type="evidence" value="ECO:0000315"/>
    <property type="project" value="MGI"/>
</dbReference>
<dbReference type="GO" id="GO:2000811">
    <property type="term" value="P:negative regulation of anoikis"/>
    <property type="evidence" value="ECO:0000315"/>
    <property type="project" value="UniProtKB"/>
</dbReference>
<dbReference type="GO" id="GO:0090090">
    <property type="term" value="P:negative regulation of canonical Wnt signaling pathway"/>
    <property type="evidence" value="ECO:0000314"/>
    <property type="project" value="UniProtKB"/>
</dbReference>
<dbReference type="GO" id="GO:0008285">
    <property type="term" value="P:negative regulation of cell population proliferation"/>
    <property type="evidence" value="ECO:0000315"/>
    <property type="project" value="MGI"/>
</dbReference>
<dbReference type="GO" id="GO:0001960">
    <property type="term" value="P:negative regulation of cytokine-mediated signaling pathway"/>
    <property type="evidence" value="ECO:0000315"/>
    <property type="project" value="MGI"/>
</dbReference>
<dbReference type="GO" id="GO:0001937">
    <property type="term" value="P:negative regulation of endothelial cell proliferation"/>
    <property type="evidence" value="ECO:0000315"/>
    <property type="project" value="MGI"/>
</dbReference>
<dbReference type="GO" id="GO:0030857">
    <property type="term" value="P:negative regulation of epithelial cell differentiation"/>
    <property type="evidence" value="ECO:0000315"/>
    <property type="project" value="MGI"/>
</dbReference>
<dbReference type="GO" id="GO:0048147">
    <property type="term" value="P:negative regulation of fibroblast proliferation"/>
    <property type="evidence" value="ECO:0000315"/>
    <property type="project" value="MGI"/>
</dbReference>
<dbReference type="GO" id="GO:0043409">
    <property type="term" value="P:negative regulation of MAPK cascade"/>
    <property type="evidence" value="ECO:0000315"/>
    <property type="project" value="MGI"/>
</dbReference>
<dbReference type="GO" id="GO:0060546">
    <property type="term" value="P:negative regulation of necroptotic process"/>
    <property type="evidence" value="ECO:0000315"/>
    <property type="project" value="CACAO"/>
</dbReference>
<dbReference type="GO" id="GO:0045019">
    <property type="term" value="P:negative regulation of nitric oxide biosynthetic process"/>
    <property type="evidence" value="ECO:0000315"/>
    <property type="project" value="MGI"/>
</dbReference>
<dbReference type="GO" id="GO:0048550">
    <property type="term" value="P:negative regulation of pinocytosis"/>
    <property type="evidence" value="ECO:0007669"/>
    <property type="project" value="Ensembl"/>
</dbReference>
<dbReference type="GO" id="GO:1901380">
    <property type="term" value="P:negative regulation of potassium ion transmembrane transport"/>
    <property type="evidence" value="ECO:0007669"/>
    <property type="project" value="Ensembl"/>
</dbReference>
<dbReference type="GO" id="GO:0031397">
    <property type="term" value="P:negative regulation of protein ubiquitination"/>
    <property type="evidence" value="ECO:0000315"/>
    <property type="project" value="UniProtKB"/>
</dbReference>
<dbReference type="GO" id="GO:0046426">
    <property type="term" value="P:negative regulation of receptor signaling pathway via JAK-STAT"/>
    <property type="evidence" value="ECO:0000314"/>
    <property type="project" value="MGI"/>
</dbReference>
<dbReference type="GO" id="GO:0009968">
    <property type="term" value="P:negative regulation of signal transduction"/>
    <property type="evidence" value="ECO:0000314"/>
    <property type="project" value="MGI"/>
</dbReference>
<dbReference type="GO" id="GO:0000122">
    <property type="term" value="P:negative regulation of transcription by RNA polymerase II"/>
    <property type="evidence" value="ECO:0000314"/>
    <property type="project" value="UniProtKB"/>
</dbReference>
<dbReference type="GO" id="GO:0006809">
    <property type="term" value="P:nitric oxide biosynthetic process"/>
    <property type="evidence" value="ECO:0000315"/>
    <property type="project" value="MGI"/>
</dbReference>
<dbReference type="GO" id="GO:0010524">
    <property type="term" value="P:positive regulation of calcium ion transport into cytosol"/>
    <property type="evidence" value="ECO:0000314"/>
    <property type="project" value="BHF-UCL"/>
</dbReference>
<dbReference type="GO" id="GO:0043123">
    <property type="term" value="P:positive regulation of canonical NF-kappaB signal transduction"/>
    <property type="evidence" value="ECO:0007669"/>
    <property type="project" value="Ensembl"/>
</dbReference>
<dbReference type="GO" id="GO:0060355">
    <property type="term" value="P:positive regulation of cell adhesion molecule production"/>
    <property type="evidence" value="ECO:0007669"/>
    <property type="project" value="Ensembl"/>
</dbReference>
<dbReference type="GO" id="GO:0030335">
    <property type="term" value="P:positive regulation of cell migration"/>
    <property type="evidence" value="ECO:0007669"/>
    <property type="project" value="Ensembl"/>
</dbReference>
<dbReference type="GO" id="GO:0010875">
    <property type="term" value="P:positive regulation of cholesterol efflux"/>
    <property type="evidence" value="ECO:0007669"/>
    <property type="project" value="Ensembl"/>
</dbReference>
<dbReference type="GO" id="GO:0120162">
    <property type="term" value="P:positive regulation of cold-induced thermogenesis"/>
    <property type="evidence" value="ECO:0000315"/>
    <property type="project" value="YuBioLab"/>
</dbReference>
<dbReference type="GO" id="GO:1904294">
    <property type="term" value="P:positive regulation of ERAD pathway"/>
    <property type="evidence" value="ECO:0007669"/>
    <property type="project" value="Ensembl"/>
</dbReference>
<dbReference type="GO" id="GO:2001238">
    <property type="term" value="P:positive regulation of extrinsic apoptotic signaling pathway"/>
    <property type="evidence" value="ECO:0007669"/>
    <property type="project" value="Ensembl"/>
</dbReference>
<dbReference type="GO" id="GO:1903598">
    <property type="term" value="P:positive regulation of gap junction assembly"/>
    <property type="evidence" value="ECO:0000315"/>
    <property type="project" value="BHF-UCL"/>
</dbReference>
<dbReference type="GO" id="GO:0010628">
    <property type="term" value="P:positive regulation of gene expression"/>
    <property type="evidence" value="ECO:0000315"/>
    <property type="project" value="BHF-UCL"/>
</dbReference>
<dbReference type="GO" id="GO:2001244">
    <property type="term" value="P:positive regulation of intrinsic apoptotic signaling pathway"/>
    <property type="evidence" value="ECO:0007669"/>
    <property type="project" value="Ensembl"/>
</dbReference>
<dbReference type="GO" id="GO:0031398">
    <property type="term" value="P:positive regulation of protein ubiquitination"/>
    <property type="evidence" value="ECO:0007669"/>
    <property type="project" value="Ensembl"/>
</dbReference>
<dbReference type="GO" id="GO:0034141">
    <property type="term" value="P:positive regulation of toll-like receptor 3 signaling pathway"/>
    <property type="evidence" value="ECO:0007669"/>
    <property type="project" value="Ensembl"/>
</dbReference>
<dbReference type="GO" id="GO:0045907">
    <property type="term" value="P:positive regulation of vasoconstriction"/>
    <property type="evidence" value="ECO:0000315"/>
    <property type="project" value="MGI"/>
</dbReference>
<dbReference type="GO" id="GO:0010608">
    <property type="term" value="P:post-transcriptional regulation of gene expression"/>
    <property type="evidence" value="ECO:0000315"/>
    <property type="project" value="BHF-UCL"/>
</dbReference>
<dbReference type="GO" id="GO:0008104">
    <property type="term" value="P:protein localization"/>
    <property type="evidence" value="ECO:0000315"/>
    <property type="project" value="MGI"/>
</dbReference>
<dbReference type="GO" id="GO:0015031">
    <property type="term" value="P:protein transport"/>
    <property type="evidence" value="ECO:0000315"/>
    <property type="project" value="MGI"/>
</dbReference>
<dbReference type="GO" id="GO:0031623">
    <property type="term" value="P:receptor internalization"/>
    <property type="evidence" value="ECO:0000250"/>
    <property type="project" value="UniProtKB"/>
</dbReference>
<dbReference type="GO" id="GO:0019065">
    <property type="term" value="P:receptor-mediated endocytosis of virus by host cell"/>
    <property type="evidence" value="ECO:0007669"/>
    <property type="project" value="Ensembl"/>
</dbReference>
<dbReference type="GO" id="GO:0030193">
    <property type="term" value="P:regulation of blood coagulation"/>
    <property type="evidence" value="ECO:0007669"/>
    <property type="project" value="Ensembl"/>
</dbReference>
<dbReference type="GO" id="GO:1901844">
    <property type="term" value="P:regulation of cell communication by electrical coupling involved in cardiac conduction"/>
    <property type="evidence" value="ECO:0000315"/>
    <property type="project" value="BHF-UCL"/>
</dbReference>
<dbReference type="GO" id="GO:0051480">
    <property type="term" value="P:regulation of cytosolic calcium ion concentration"/>
    <property type="evidence" value="ECO:0007669"/>
    <property type="project" value="Ensembl"/>
</dbReference>
<dbReference type="GO" id="GO:2000535">
    <property type="term" value="P:regulation of entry of bacterium into host cell"/>
    <property type="evidence" value="ECO:0007669"/>
    <property type="project" value="Ensembl"/>
</dbReference>
<dbReference type="GO" id="GO:0019217">
    <property type="term" value="P:regulation of fatty acid metabolic process"/>
    <property type="evidence" value="ECO:0000315"/>
    <property type="project" value="MGI"/>
</dbReference>
<dbReference type="GO" id="GO:0086091">
    <property type="term" value="P:regulation of heart rate by cardiac conduction"/>
    <property type="evidence" value="ECO:0000315"/>
    <property type="project" value="BHF-UCL"/>
</dbReference>
<dbReference type="GO" id="GO:0098903">
    <property type="term" value="P:regulation of membrane repolarization during action potential"/>
    <property type="evidence" value="ECO:0007669"/>
    <property type="project" value="Ensembl"/>
</dbReference>
<dbReference type="GO" id="GO:1900027">
    <property type="term" value="P:regulation of ruffle assembly"/>
    <property type="evidence" value="ECO:0007669"/>
    <property type="project" value="Ensembl"/>
</dbReference>
<dbReference type="GO" id="GO:0006940">
    <property type="term" value="P:regulation of smooth muscle contraction"/>
    <property type="evidence" value="ECO:0000315"/>
    <property type="project" value="MGI"/>
</dbReference>
<dbReference type="GO" id="GO:0002026">
    <property type="term" value="P:regulation of the force of heart contraction"/>
    <property type="evidence" value="ECO:0000315"/>
    <property type="project" value="MGI"/>
</dbReference>
<dbReference type="GO" id="GO:0003057">
    <property type="term" value="P:regulation of the force of heart contraction by chemical signal"/>
    <property type="evidence" value="ECO:0000316"/>
    <property type="project" value="MGI"/>
</dbReference>
<dbReference type="GO" id="GO:0098911">
    <property type="term" value="P:regulation of ventricular cardiac muscle cell action potential"/>
    <property type="evidence" value="ECO:0000315"/>
    <property type="project" value="BHF-UCL"/>
</dbReference>
<dbReference type="GO" id="GO:0009617">
    <property type="term" value="P:response to bacterium"/>
    <property type="evidence" value="ECO:0007669"/>
    <property type="project" value="Ensembl"/>
</dbReference>
<dbReference type="GO" id="GO:0051592">
    <property type="term" value="P:response to calcium ion"/>
    <property type="evidence" value="ECO:0000314"/>
    <property type="project" value="BHF-UCL"/>
</dbReference>
<dbReference type="GO" id="GO:0043627">
    <property type="term" value="P:response to estrogen"/>
    <property type="evidence" value="ECO:0000314"/>
    <property type="project" value="MGI"/>
</dbReference>
<dbReference type="GO" id="GO:0001666">
    <property type="term" value="P:response to hypoxia"/>
    <property type="evidence" value="ECO:0000315"/>
    <property type="project" value="MGI"/>
</dbReference>
<dbReference type="GO" id="GO:0002931">
    <property type="term" value="P:response to ischemia"/>
    <property type="evidence" value="ECO:0000315"/>
    <property type="project" value="MGI"/>
</dbReference>
<dbReference type="GO" id="GO:0032570">
    <property type="term" value="P:response to progesterone"/>
    <property type="evidence" value="ECO:0000266"/>
    <property type="project" value="MGI"/>
</dbReference>
<dbReference type="GO" id="GO:0007519">
    <property type="term" value="P:skeletal muscle tissue development"/>
    <property type="evidence" value="ECO:0000315"/>
    <property type="project" value="MGI"/>
</dbReference>
<dbReference type="GO" id="GO:0031295">
    <property type="term" value="P:T cell costimulation"/>
    <property type="evidence" value="ECO:0000250"/>
    <property type="project" value="UniProtKB"/>
</dbReference>
<dbReference type="GO" id="GO:0006641">
    <property type="term" value="P:triglyceride metabolic process"/>
    <property type="evidence" value="ECO:0000315"/>
    <property type="project" value="MGI"/>
</dbReference>
<dbReference type="GO" id="GO:0001570">
    <property type="term" value="P:vasculogenesis"/>
    <property type="evidence" value="ECO:0000315"/>
    <property type="project" value="MGI"/>
</dbReference>
<dbReference type="GO" id="GO:0042310">
    <property type="term" value="P:vasoconstriction"/>
    <property type="evidence" value="ECO:0000315"/>
    <property type="project" value="MGI"/>
</dbReference>
<dbReference type="InterPro" id="IPR001612">
    <property type="entry name" value="Caveolin"/>
</dbReference>
<dbReference type="InterPro" id="IPR018361">
    <property type="entry name" value="Caveolin_CS"/>
</dbReference>
<dbReference type="PANTHER" id="PTHR10844">
    <property type="entry name" value="CAVEOLIN"/>
    <property type="match status" value="1"/>
</dbReference>
<dbReference type="PANTHER" id="PTHR10844:SF18">
    <property type="entry name" value="CAVEOLIN-1"/>
    <property type="match status" value="1"/>
</dbReference>
<dbReference type="Pfam" id="PF01146">
    <property type="entry name" value="Caveolin"/>
    <property type="match status" value="1"/>
</dbReference>
<dbReference type="PROSITE" id="PS01210">
    <property type="entry name" value="CAVEOLIN"/>
    <property type="match status" value="1"/>
</dbReference>